<comment type="function">
    <text evidence="1">Catalyzes the reversible phosphorylation of UMP to UDP.</text>
</comment>
<comment type="catalytic activity">
    <reaction evidence="1">
        <text>UMP + ATP = UDP + ADP</text>
        <dbReference type="Rhea" id="RHEA:24400"/>
        <dbReference type="ChEBI" id="CHEBI:30616"/>
        <dbReference type="ChEBI" id="CHEBI:57865"/>
        <dbReference type="ChEBI" id="CHEBI:58223"/>
        <dbReference type="ChEBI" id="CHEBI:456216"/>
        <dbReference type="EC" id="2.7.4.22"/>
    </reaction>
</comment>
<comment type="activity regulation">
    <text evidence="1">Allosterically activated by GTP. Inhibited by UTP.</text>
</comment>
<comment type="pathway">
    <text evidence="1">Pyrimidine metabolism; CTP biosynthesis via de novo pathway; UDP from UMP (UMPK route): step 1/1.</text>
</comment>
<comment type="subunit">
    <text evidence="1">Homohexamer.</text>
</comment>
<comment type="subcellular location">
    <subcellularLocation>
        <location evidence="1">Cytoplasm</location>
    </subcellularLocation>
</comment>
<comment type="similarity">
    <text evidence="1">Belongs to the UMP kinase family.</text>
</comment>
<accession>A3MZT5</accession>
<dbReference type="EC" id="2.7.4.22" evidence="1"/>
<dbReference type="EMBL" id="CP000569">
    <property type="protein sequence ID" value="ABN73671.1"/>
    <property type="molecule type" value="Genomic_DNA"/>
</dbReference>
<dbReference type="RefSeq" id="WP_009875003.1">
    <property type="nucleotide sequence ID" value="NC_009053.1"/>
</dbReference>
<dbReference type="SMR" id="A3MZT5"/>
<dbReference type="STRING" id="416269.APL_0569"/>
<dbReference type="EnsemblBacteria" id="ABN73671">
    <property type="protein sequence ID" value="ABN73671"/>
    <property type="gene ID" value="APL_0569"/>
</dbReference>
<dbReference type="KEGG" id="apl:APL_0569"/>
<dbReference type="PATRIC" id="fig|416269.6.peg.600"/>
<dbReference type="eggNOG" id="COG0528">
    <property type="taxonomic scope" value="Bacteria"/>
</dbReference>
<dbReference type="HOGENOM" id="CLU_033861_0_0_6"/>
<dbReference type="UniPathway" id="UPA00159">
    <property type="reaction ID" value="UER00275"/>
</dbReference>
<dbReference type="Proteomes" id="UP000001432">
    <property type="component" value="Chromosome"/>
</dbReference>
<dbReference type="GO" id="GO:0005829">
    <property type="term" value="C:cytosol"/>
    <property type="evidence" value="ECO:0007669"/>
    <property type="project" value="TreeGrafter"/>
</dbReference>
<dbReference type="GO" id="GO:0005524">
    <property type="term" value="F:ATP binding"/>
    <property type="evidence" value="ECO:0007669"/>
    <property type="project" value="UniProtKB-KW"/>
</dbReference>
<dbReference type="GO" id="GO:0033862">
    <property type="term" value="F:UMP kinase activity"/>
    <property type="evidence" value="ECO:0007669"/>
    <property type="project" value="UniProtKB-EC"/>
</dbReference>
<dbReference type="GO" id="GO:0044210">
    <property type="term" value="P:'de novo' CTP biosynthetic process"/>
    <property type="evidence" value="ECO:0007669"/>
    <property type="project" value="UniProtKB-UniRule"/>
</dbReference>
<dbReference type="GO" id="GO:0006225">
    <property type="term" value="P:UDP biosynthetic process"/>
    <property type="evidence" value="ECO:0007669"/>
    <property type="project" value="TreeGrafter"/>
</dbReference>
<dbReference type="CDD" id="cd04254">
    <property type="entry name" value="AAK_UMPK-PyrH-Ec"/>
    <property type="match status" value="1"/>
</dbReference>
<dbReference type="FunFam" id="3.40.1160.10:FF:000001">
    <property type="entry name" value="Uridylate kinase"/>
    <property type="match status" value="1"/>
</dbReference>
<dbReference type="Gene3D" id="3.40.1160.10">
    <property type="entry name" value="Acetylglutamate kinase-like"/>
    <property type="match status" value="1"/>
</dbReference>
<dbReference type="HAMAP" id="MF_01220_B">
    <property type="entry name" value="PyrH_B"/>
    <property type="match status" value="1"/>
</dbReference>
<dbReference type="InterPro" id="IPR036393">
    <property type="entry name" value="AceGlu_kinase-like_sf"/>
</dbReference>
<dbReference type="InterPro" id="IPR001048">
    <property type="entry name" value="Asp/Glu/Uridylate_kinase"/>
</dbReference>
<dbReference type="InterPro" id="IPR011817">
    <property type="entry name" value="Uridylate_kinase"/>
</dbReference>
<dbReference type="InterPro" id="IPR015963">
    <property type="entry name" value="Uridylate_kinase_bac"/>
</dbReference>
<dbReference type="NCBIfam" id="TIGR02075">
    <property type="entry name" value="pyrH_bact"/>
    <property type="match status" value="1"/>
</dbReference>
<dbReference type="PANTHER" id="PTHR42833">
    <property type="entry name" value="URIDYLATE KINASE"/>
    <property type="match status" value="1"/>
</dbReference>
<dbReference type="PANTHER" id="PTHR42833:SF4">
    <property type="entry name" value="URIDYLATE KINASE PUMPKIN, CHLOROPLASTIC"/>
    <property type="match status" value="1"/>
</dbReference>
<dbReference type="Pfam" id="PF00696">
    <property type="entry name" value="AA_kinase"/>
    <property type="match status" value="1"/>
</dbReference>
<dbReference type="PIRSF" id="PIRSF005650">
    <property type="entry name" value="Uridylate_kin"/>
    <property type="match status" value="1"/>
</dbReference>
<dbReference type="SUPFAM" id="SSF53633">
    <property type="entry name" value="Carbamate kinase-like"/>
    <property type="match status" value="1"/>
</dbReference>
<name>PYRH_ACTP2</name>
<proteinExistence type="inferred from homology"/>
<gene>
    <name evidence="1" type="primary">pyrH</name>
    <name type="ordered locus">APL_0569</name>
</gene>
<reference key="1">
    <citation type="journal article" date="2008" name="J. Bacteriol.">
        <title>The complete genome sequence of Actinobacillus pleuropneumoniae L20 (serotype 5b).</title>
        <authorList>
            <person name="Foote S.J."/>
            <person name="Bosse J.T."/>
            <person name="Bouevitch A.B."/>
            <person name="Langford P.R."/>
            <person name="Young N.M."/>
            <person name="Nash J.H.E."/>
        </authorList>
    </citation>
    <scope>NUCLEOTIDE SEQUENCE [LARGE SCALE GENOMIC DNA]</scope>
    <source>
        <strain>L20</strain>
    </source>
</reference>
<sequence length="237" mass="25701">MSNPIYKRILLKLSGEALQGDEGFGIDPSILDRMALEIKELIEMGVEVGVVLGGGNLFRGAKLAKAGMNRVVGDHMGMLATVMNGLAMRDALHRADVNAKLMSAFQLNGICDTYNWSEAIKMLREKRVVIFSAGTGSPFFTTDSAACLRGIEIEADIVLKATKVDGVYDKDPAKFADAKLYNQLTYAEVIEQELQVMDLAAFTLARDHGMPIRVFNMVKPGALKQVITGTAEGTIIS</sequence>
<evidence type="ECO:0000255" key="1">
    <source>
        <dbReference type="HAMAP-Rule" id="MF_01220"/>
    </source>
</evidence>
<organism>
    <name type="scientific">Actinobacillus pleuropneumoniae serotype 5b (strain L20)</name>
    <dbReference type="NCBI Taxonomy" id="416269"/>
    <lineage>
        <taxon>Bacteria</taxon>
        <taxon>Pseudomonadati</taxon>
        <taxon>Pseudomonadota</taxon>
        <taxon>Gammaproteobacteria</taxon>
        <taxon>Pasteurellales</taxon>
        <taxon>Pasteurellaceae</taxon>
        <taxon>Actinobacillus</taxon>
    </lineage>
</organism>
<protein>
    <recommendedName>
        <fullName evidence="1">Uridylate kinase</fullName>
        <shortName evidence="1">UK</shortName>
        <ecNumber evidence="1">2.7.4.22</ecNumber>
    </recommendedName>
    <alternativeName>
        <fullName evidence="1">Uridine monophosphate kinase</fullName>
        <shortName evidence="1">UMP kinase</shortName>
        <shortName evidence="1">UMPK</shortName>
    </alternativeName>
</protein>
<keyword id="KW-0021">Allosteric enzyme</keyword>
<keyword id="KW-0067">ATP-binding</keyword>
<keyword id="KW-0963">Cytoplasm</keyword>
<keyword id="KW-0418">Kinase</keyword>
<keyword id="KW-0547">Nucleotide-binding</keyword>
<keyword id="KW-0665">Pyrimidine biosynthesis</keyword>
<keyword id="KW-1185">Reference proteome</keyword>
<keyword id="KW-0808">Transferase</keyword>
<feature type="chain" id="PRO_1000053883" description="Uridylate kinase">
    <location>
        <begin position="1"/>
        <end position="237"/>
    </location>
</feature>
<feature type="region of interest" description="Involved in allosteric activation by GTP" evidence="1">
    <location>
        <begin position="20"/>
        <end position="25"/>
    </location>
</feature>
<feature type="binding site" evidence="1">
    <location>
        <begin position="12"/>
        <end position="15"/>
    </location>
    <ligand>
        <name>ATP</name>
        <dbReference type="ChEBI" id="CHEBI:30616"/>
    </ligand>
</feature>
<feature type="binding site" evidence="1">
    <location>
        <position position="54"/>
    </location>
    <ligand>
        <name>UMP</name>
        <dbReference type="ChEBI" id="CHEBI:57865"/>
    </ligand>
</feature>
<feature type="binding site" evidence="1">
    <location>
        <position position="55"/>
    </location>
    <ligand>
        <name>ATP</name>
        <dbReference type="ChEBI" id="CHEBI:30616"/>
    </ligand>
</feature>
<feature type="binding site" evidence="1">
    <location>
        <position position="59"/>
    </location>
    <ligand>
        <name>ATP</name>
        <dbReference type="ChEBI" id="CHEBI:30616"/>
    </ligand>
</feature>
<feature type="binding site" evidence="1">
    <location>
        <position position="74"/>
    </location>
    <ligand>
        <name>UMP</name>
        <dbReference type="ChEBI" id="CHEBI:57865"/>
    </ligand>
</feature>
<feature type="binding site" evidence="1">
    <location>
        <begin position="135"/>
        <end position="142"/>
    </location>
    <ligand>
        <name>UMP</name>
        <dbReference type="ChEBI" id="CHEBI:57865"/>
    </ligand>
</feature>
<feature type="binding site" evidence="1">
    <location>
        <position position="162"/>
    </location>
    <ligand>
        <name>ATP</name>
        <dbReference type="ChEBI" id="CHEBI:30616"/>
    </ligand>
</feature>
<feature type="binding site" evidence="1">
    <location>
        <position position="168"/>
    </location>
    <ligand>
        <name>ATP</name>
        <dbReference type="ChEBI" id="CHEBI:30616"/>
    </ligand>
</feature>
<feature type="binding site" evidence="1">
    <location>
        <position position="171"/>
    </location>
    <ligand>
        <name>ATP</name>
        <dbReference type="ChEBI" id="CHEBI:30616"/>
    </ligand>
</feature>